<gene>
    <name type="primary">YIPF7</name>
    <name type="synonym">FINGER9</name>
    <name type="synonym">YIP1B</name>
</gene>
<protein>
    <recommendedName>
        <fullName>Protein YIPF7</fullName>
    </recommendedName>
    <alternativeName>
        <fullName>Five-pass transmembrane protein localizing in the Golgi apparatus and the endoplasmic reticulum 9</fullName>
    </alternativeName>
    <alternativeName>
        <fullName>YIP1 family member 7</fullName>
    </alternativeName>
</protein>
<name>YIPF7_HUMAN</name>
<accession>Q8N8F6</accession>
<accession>J3KR00</accession>
<accession>Q3SY21</accession>
<accession>Q3SY22</accession>
<comment type="subcellular location">
    <subcellularLocation>
        <location evidence="1">Endoplasmic reticulum membrane</location>
        <topology>Multi-pass membrane protein</topology>
    </subcellularLocation>
    <subcellularLocation>
        <location evidence="5">Golgi apparatus</location>
        <location evidence="5">cis-Golgi network membrane</location>
    </subcellularLocation>
    <subcellularLocation>
        <location evidence="5">Golgi apparatus</location>
        <location evidence="5">trans-Golgi network membrane</location>
    </subcellularLocation>
    <text evidence="5">Evenly distributed between cis- and trans-Golgi apparatus.</text>
</comment>
<comment type="alternative products">
    <event type="alternative splicing"/>
    <isoform>
        <id>Q8N8F6-1</id>
        <name>1</name>
        <sequence type="displayed"/>
    </isoform>
    <isoform>
        <id>Q8N8F6-2</id>
        <name>2</name>
        <sequence type="described" ref="VSP_033435"/>
    </isoform>
    <isoform>
        <id>Q8N8F6-3</id>
        <name>3</name>
        <sequence type="described" ref="VSP_033431 VSP_033432"/>
    </isoform>
    <isoform>
        <id>Q8N8F6-4</id>
        <name>4</name>
        <sequence type="described" ref="VSP_033433 VSP_033434"/>
    </isoform>
    <isoform>
        <id>Q8N8F6-5</id>
        <name>5</name>
        <sequence type="described" ref="VSP_062194 VSP_062195"/>
    </isoform>
</comment>
<comment type="similarity">
    <text evidence="8">Belongs to the YIP1 family.</text>
</comment>
<comment type="sequence caution" evidence="8">
    <conflict type="erroneous initiation">
        <sequence resource="EMBL-CDS" id="AAI03996"/>
    </conflict>
    <text>Extended N-terminus.</text>
</comment>
<comment type="sequence caution" evidence="8">
    <conflict type="erroneous initiation">
        <sequence resource="EMBL-CDS" id="AAI03997"/>
    </conflict>
    <text>Extended N-terminus.</text>
</comment>
<comment type="sequence caution" evidence="8">
    <conflict type="erroneous initiation">
        <sequence resource="EMBL-CDS" id="BAC04887"/>
    </conflict>
    <text>Extended N-terminus.</text>
</comment>
<organism>
    <name type="scientific">Homo sapiens</name>
    <name type="common">Human</name>
    <dbReference type="NCBI Taxonomy" id="9606"/>
    <lineage>
        <taxon>Eukaryota</taxon>
        <taxon>Metazoa</taxon>
        <taxon>Chordata</taxon>
        <taxon>Craniata</taxon>
        <taxon>Vertebrata</taxon>
        <taxon>Euteleostomi</taxon>
        <taxon>Mammalia</taxon>
        <taxon>Eutheria</taxon>
        <taxon>Euarchontoglires</taxon>
        <taxon>Primates</taxon>
        <taxon>Haplorrhini</taxon>
        <taxon>Catarrhini</taxon>
        <taxon>Hominidae</taxon>
        <taxon>Homo</taxon>
    </lineage>
</organism>
<reference key="1">
    <citation type="journal article" date="2004" name="Nat. Genet.">
        <title>Complete sequencing and characterization of 21,243 full-length human cDNAs.</title>
        <authorList>
            <person name="Ota T."/>
            <person name="Suzuki Y."/>
            <person name="Nishikawa T."/>
            <person name="Otsuki T."/>
            <person name="Sugiyama T."/>
            <person name="Irie R."/>
            <person name="Wakamatsu A."/>
            <person name="Hayashi K."/>
            <person name="Sato H."/>
            <person name="Nagai K."/>
            <person name="Kimura K."/>
            <person name="Makita H."/>
            <person name="Sekine M."/>
            <person name="Obayashi M."/>
            <person name="Nishi T."/>
            <person name="Shibahara T."/>
            <person name="Tanaka T."/>
            <person name="Ishii S."/>
            <person name="Yamamoto J."/>
            <person name="Saito K."/>
            <person name="Kawai Y."/>
            <person name="Isono Y."/>
            <person name="Nakamura Y."/>
            <person name="Nagahari K."/>
            <person name="Murakami K."/>
            <person name="Yasuda T."/>
            <person name="Iwayanagi T."/>
            <person name="Wagatsuma M."/>
            <person name="Shiratori A."/>
            <person name="Sudo H."/>
            <person name="Hosoiri T."/>
            <person name="Kaku Y."/>
            <person name="Kodaira H."/>
            <person name="Kondo H."/>
            <person name="Sugawara M."/>
            <person name="Takahashi M."/>
            <person name="Kanda K."/>
            <person name="Yokoi T."/>
            <person name="Furuya T."/>
            <person name="Kikkawa E."/>
            <person name="Omura Y."/>
            <person name="Abe K."/>
            <person name="Kamihara K."/>
            <person name="Katsuta N."/>
            <person name="Sato K."/>
            <person name="Tanikawa M."/>
            <person name="Yamazaki M."/>
            <person name="Ninomiya K."/>
            <person name="Ishibashi T."/>
            <person name="Yamashita H."/>
            <person name="Murakawa K."/>
            <person name="Fujimori K."/>
            <person name="Tanai H."/>
            <person name="Kimata M."/>
            <person name="Watanabe M."/>
            <person name="Hiraoka S."/>
            <person name="Chiba Y."/>
            <person name="Ishida S."/>
            <person name="Ono Y."/>
            <person name="Takiguchi S."/>
            <person name="Watanabe S."/>
            <person name="Yosida M."/>
            <person name="Hotuta T."/>
            <person name="Kusano J."/>
            <person name="Kanehori K."/>
            <person name="Takahashi-Fujii A."/>
            <person name="Hara H."/>
            <person name="Tanase T.-O."/>
            <person name="Nomura Y."/>
            <person name="Togiya S."/>
            <person name="Komai F."/>
            <person name="Hara R."/>
            <person name="Takeuchi K."/>
            <person name="Arita M."/>
            <person name="Imose N."/>
            <person name="Musashino K."/>
            <person name="Yuuki H."/>
            <person name="Oshima A."/>
            <person name="Sasaki N."/>
            <person name="Aotsuka S."/>
            <person name="Yoshikawa Y."/>
            <person name="Matsunawa H."/>
            <person name="Ichihara T."/>
            <person name="Shiohata N."/>
            <person name="Sano S."/>
            <person name="Moriya S."/>
            <person name="Momiyama H."/>
            <person name="Satoh N."/>
            <person name="Takami S."/>
            <person name="Terashima Y."/>
            <person name="Suzuki O."/>
            <person name="Nakagawa S."/>
            <person name="Senoh A."/>
            <person name="Mizoguchi H."/>
            <person name="Goto Y."/>
            <person name="Shimizu F."/>
            <person name="Wakebe H."/>
            <person name="Hishigaki H."/>
            <person name="Watanabe T."/>
            <person name="Sugiyama A."/>
            <person name="Takemoto M."/>
            <person name="Kawakami B."/>
            <person name="Yamazaki M."/>
            <person name="Watanabe K."/>
            <person name="Kumagai A."/>
            <person name="Itakura S."/>
            <person name="Fukuzumi Y."/>
            <person name="Fujimori Y."/>
            <person name="Komiyama M."/>
            <person name="Tashiro H."/>
            <person name="Tanigami A."/>
            <person name="Fujiwara T."/>
            <person name="Ono T."/>
            <person name="Yamada K."/>
            <person name="Fujii Y."/>
            <person name="Ozaki K."/>
            <person name="Hirao M."/>
            <person name="Ohmori Y."/>
            <person name="Kawabata A."/>
            <person name="Hikiji T."/>
            <person name="Kobatake N."/>
            <person name="Inagaki H."/>
            <person name="Ikema Y."/>
            <person name="Okamoto S."/>
            <person name="Okitani R."/>
            <person name="Kawakami T."/>
            <person name="Noguchi S."/>
            <person name="Itoh T."/>
            <person name="Shigeta K."/>
            <person name="Senba T."/>
            <person name="Matsumura K."/>
            <person name="Nakajima Y."/>
            <person name="Mizuno T."/>
            <person name="Morinaga M."/>
            <person name="Sasaki M."/>
            <person name="Togashi T."/>
            <person name="Oyama M."/>
            <person name="Hata H."/>
            <person name="Watanabe M."/>
            <person name="Komatsu T."/>
            <person name="Mizushima-Sugano J."/>
            <person name="Satoh T."/>
            <person name="Shirai Y."/>
            <person name="Takahashi Y."/>
            <person name="Nakagawa K."/>
            <person name="Okumura K."/>
            <person name="Nagase T."/>
            <person name="Nomura N."/>
            <person name="Kikuchi H."/>
            <person name="Masuho Y."/>
            <person name="Yamashita R."/>
            <person name="Nakai K."/>
            <person name="Yada T."/>
            <person name="Nakamura Y."/>
            <person name="Ohara O."/>
            <person name="Isogai T."/>
            <person name="Sugano S."/>
        </authorList>
    </citation>
    <scope>NUCLEOTIDE SEQUENCE [LARGE SCALE MRNA] (ISOFORMS 2 AND 5)</scope>
    <scope>VARIANT THR-30</scope>
    <source>
        <tissue>Skeletal muscle</tissue>
    </source>
</reference>
<reference key="2">
    <citation type="journal article" date="2005" name="Nature">
        <title>Generation and annotation of the DNA sequences of human chromosomes 2 and 4.</title>
        <authorList>
            <person name="Hillier L.W."/>
            <person name="Graves T.A."/>
            <person name="Fulton R.S."/>
            <person name="Fulton L.A."/>
            <person name="Pepin K.H."/>
            <person name="Minx P."/>
            <person name="Wagner-McPherson C."/>
            <person name="Layman D."/>
            <person name="Wylie K."/>
            <person name="Sekhon M."/>
            <person name="Becker M.C."/>
            <person name="Fewell G.A."/>
            <person name="Delehaunty K.D."/>
            <person name="Miner T.L."/>
            <person name="Nash W.E."/>
            <person name="Kremitzki C."/>
            <person name="Oddy L."/>
            <person name="Du H."/>
            <person name="Sun H."/>
            <person name="Bradshaw-Cordum H."/>
            <person name="Ali J."/>
            <person name="Carter J."/>
            <person name="Cordes M."/>
            <person name="Harris A."/>
            <person name="Isak A."/>
            <person name="van Brunt A."/>
            <person name="Nguyen C."/>
            <person name="Du F."/>
            <person name="Courtney L."/>
            <person name="Kalicki J."/>
            <person name="Ozersky P."/>
            <person name="Abbott S."/>
            <person name="Armstrong J."/>
            <person name="Belter E.A."/>
            <person name="Caruso L."/>
            <person name="Cedroni M."/>
            <person name="Cotton M."/>
            <person name="Davidson T."/>
            <person name="Desai A."/>
            <person name="Elliott G."/>
            <person name="Erb T."/>
            <person name="Fronick C."/>
            <person name="Gaige T."/>
            <person name="Haakenson W."/>
            <person name="Haglund K."/>
            <person name="Holmes A."/>
            <person name="Harkins R."/>
            <person name="Kim K."/>
            <person name="Kruchowski S.S."/>
            <person name="Strong C.M."/>
            <person name="Grewal N."/>
            <person name="Goyea E."/>
            <person name="Hou S."/>
            <person name="Levy A."/>
            <person name="Martinka S."/>
            <person name="Mead K."/>
            <person name="McLellan M.D."/>
            <person name="Meyer R."/>
            <person name="Randall-Maher J."/>
            <person name="Tomlinson C."/>
            <person name="Dauphin-Kohlberg S."/>
            <person name="Kozlowicz-Reilly A."/>
            <person name="Shah N."/>
            <person name="Swearengen-Shahid S."/>
            <person name="Snider J."/>
            <person name="Strong J.T."/>
            <person name="Thompson J."/>
            <person name="Yoakum M."/>
            <person name="Leonard S."/>
            <person name="Pearman C."/>
            <person name="Trani L."/>
            <person name="Radionenko M."/>
            <person name="Waligorski J.E."/>
            <person name="Wang C."/>
            <person name="Rock S.M."/>
            <person name="Tin-Wollam A.-M."/>
            <person name="Maupin R."/>
            <person name="Latreille P."/>
            <person name="Wendl M.C."/>
            <person name="Yang S.-P."/>
            <person name="Pohl C."/>
            <person name="Wallis J.W."/>
            <person name="Spieth J."/>
            <person name="Bieri T.A."/>
            <person name="Berkowicz N."/>
            <person name="Nelson J.O."/>
            <person name="Osborne J."/>
            <person name="Ding L."/>
            <person name="Meyer R."/>
            <person name="Sabo A."/>
            <person name="Shotland Y."/>
            <person name="Sinha P."/>
            <person name="Wohldmann P.E."/>
            <person name="Cook L.L."/>
            <person name="Hickenbotham M.T."/>
            <person name="Eldred J."/>
            <person name="Williams D."/>
            <person name="Jones T.A."/>
            <person name="She X."/>
            <person name="Ciccarelli F.D."/>
            <person name="Izaurralde E."/>
            <person name="Taylor J."/>
            <person name="Schmutz J."/>
            <person name="Myers R.M."/>
            <person name="Cox D.R."/>
            <person name="Huang X."/>
            <person name="McPherson J.D."/>
            <person name="Mardis E.R."/>
            <person name="Clifton S.W."/>
            <person name="Warren W.C."/>
            <person name="Chinwalla A.T."/>
            <person name="Eddy S.R."/>
            <person name="Marra M.A."/>
            <person name="Ovcharenko I."/>
            <person name="Furey T.S."/>
            <person name="Miller W."/>
            <person name="Eichler E.E."/>
            <person name="Bork P."/>
            <person name="Suyama M."/>
            <person name="Torrents D."/>
            <person name="Waterston R.H."/>
            <person name="Wilson R.K."/>
        </authorList>
    </citation>
    <scope>NUCLEOTIDE SEQUENCE [LARGE SCALE GENOMIC DNA]</scope>
</reference>
<reference key="3">
    <citation type="journal article" date="2004" name="Genome Res.">
        <title>The status, quality, and expansion of the NIH full-length cDNA project: the Mammalian Gene Collection (MGC).</title>
        <authorList>
            <consortium name="The MGC Project Team"/>
        </authorList>
    </citation>
    <scope>NUCLEOTIDE SEQUENCE [LARGE SCALE MRNA] (ISOFORMS 3 AND 4)</scope>
</reference>
<reference key="4">
    <citation type="journal article" date="2017" name="Histochem. Cell Biol.">
        <title>Functional characterisation of the YIPF protein family in mammalian cells.</title>
        <authorList>
            <person name="Kranjc T."/>
            <person name="Dempsey E."/>
            <person name="Cagney G."/>
            <person name="Nakamura N."/>
            <person name="Shields D.C."/>
            <person name="Simpson J.C."/>
        </authorList>
    </citation>
    <scope>SUBCELLULAR LOCATION</scope>
    <scope>TOPOLOGY</scope>
</reference>
<feature type="chain" id="PRO_0000333007" description="Protein YIPF7">
    <location>
        <begin position="1"/>
        <end position="256"/>
    </location>
</feature>
<feature type="topological domain" description="Cytoplasmic" evidence="9">
    <location>
        <begin position="1"/>
        <end position="125"/>
    </location>
</feature>
<feature type="transmembrane region" description="Helical" evidence="2">
    <location>
        <begin position="126"/>
        <end position="146"/>
    </location>
</feature>
<feature type="topological domain" description="Extracellular" evidence="8">
    <location>
        <position position="147"/>
    </location>
</feature>
<feature type="transmembrane region" description="Helical" evidence="2">
    <location>
        <begin position="148"/>
        <end position="168"/>
    </location>
</feature>
<feature type="topological domain" description="Cytoplasmic" evidence="8">
    <location>
        <begin position="169"/>
        <end position="172"/>
    </location>
</feature>
<feature type="transmembrane region" description="Helical" evidence="2">
    <location>
        <begin position="173"/>
        <end position="193"/>
    </location>
</feature>
<feature type="topological domain" description="Extracellular" evidence="8">
    <location>
        <begin position="194"/>
        <end position="196"/>
    </location>
</feature>
<feature type="transmembrane region" description="Helical" evidence="2">
    <location>
        <begin position="197"/>
        <end position="217"/>
    </location>
</feature>
<feature type="topological domain" description="Cytoplasmic" evidence="8">
    <location>
        <begin position="218"/>
        <end position="235"/>
    </location>
</feature>
<feature type="transmembrane region" description="Helical" evidence="2">
    <location>
        <begin position="236"/>
        <end position="256"/>
    </location>
</feature>
<feature type="region of interest" description="Disordered" evidence="3">
    <location>
        <begin position="18"/>
        <end position="48"/>
    </location>
</feature>
<feature type="compositionally biased region" description="Polar residues" evidence="3">
    <location>
        <begin position="18"/>
        <end position="31"/>
    </location>
</feature>
<feature type="compositionally biased region" description="Polar residues" evidence="3">
    <location>
        <begin position="38"/>
        <end position="48"/>
    </location>
</feature>
<feature type="splice variant" id="VSP_062194" description="In isoform 5." evidence="6">
    <original>K</original>
    <variation>KLNRKHGDSCSWGGHRELLLMVEGTGASSHRAGAGSRER</variation>
    <location>
        <position position="39"/>
    </location>
</feature>
<feature type="splice variant" id="VSP_033431" description="In isoform 3." evidence="7">
    <original>QQAGE</original>
    <variation>TWNPF</variation>
    <location>
        <begin position="40"/>
        <end position="44"/>
    </location>
</feature>
<feature type="splice variant" id="VSP_033432" description="In isoform 3." evidence="7">
    <location>
        <begin position="45"/>
        <end position="256"/>
    </location>
</feature>
<feature type="splice variant" id="VSP_033433" description="In isoform 4." evidence="7">
    <original>ELGIHFDHIWQKTLT</original>
    <variation>DKNLESILITYGKKL</variation>
    <location>
        <begin position="94"/>
        <end position="108"/>
    </location>
</feature>
<feature type="splice variant" id="VSP_033434" description="In isoform 4." evidence="7">
    <location>
        <begin position="109"/>
        <end position="256"/>
    </location>
</feature>
<feature type="splice variant" id="VSP_062195" description="In isoform 5." evidence="6">
    <location>
        <begin position="123"/>
        <end position="256"/>
    </location>
</feature>
<feature type="splice variant" id="VSP_033435" description="In isoform 2." evidence="6">
    <original>AGKVQFGYVYGMSAIGCLVIHALLNLMSSSGVSYGCVASVLGYCLLPMVILSGCAMFFSLQGIFGIMSSLVIIGWCSLSASKIFIAALHMEGQQLLVAYPCAILYGLFALLTIF</original>
    <variation>VMCHRKHQILMLVLSSAGFEAICINIRETVSPYIVNFLSERE</variation>
    <location>
        <begin position="143"/>
        <end position="256"/>
    </location>
</feature>
<feature type="sequence variant" id="VAR_043036" description="In dbSNP:rs2348353." evidence="4">
    <original>A</original>
    <variation>T</variation>
    <location>
        <position position="30"/>
    </location>
</feature>
<feature type="sequence conflict" description="In Ref. 1; BAC04887." evidence="8" ref="1">
    <original>N</original>
    <variation>D</variation>
    <location>
        <position position="26"/>
    </location>
</feature>
<feature type="sequence conflict" description="In Ref. 1; BAC04887." evidence="8" ref="1">
    <original>K</original>
    <variation>E</variation>
    <location>
        <position position="114"/>
    </location>
</feature>
<keyword id="KW-0025">Alternative splicing</keyword>
<keyword id="KW-0256">Endoplasmic reticulum</keyword>
<keyword id="KW-0333">Golgi apparatus</keyword>
<keyword id="KW-0472">Membrane</keyword>
<keyword id="KW-1185">Reference proteome</keyword>
<keyword id="KW-0812">Transmembrane</keyword>
<keyword id="KW-1133">Transmembrane helix</keyword>
<proteinExistence type="evidence at protein level"/>
<dbReference type="EMBL" id="DA899652">
    <property type="status" value="NOT_ANNOTATED_CDS"/>
    <property type="molecule type" value="mRNA"/>
</dbReference>
<dbReference type="EMBL" id="AK096895">
    <property type="protein sequence ID" value="BAC04887.1"/>
    <property type="status" value="ALT_INIT"/>
    <property type="molecule type" value="mRNA"/>
</dbReference>
<dbReference type="EMBL" id="AC093852">
    <property type="status" value="NOT_ANNOTATED_CDS"/>
    <property type="molecule type" value="Genomic_DNA"/>
</dbReference>
<dbReference type="EMBL" id="AC096586">
    <property type="status" value="NOT_ANNOTATED_CDS"/>
    <property type="molecule type" value="Genomic_DNA"/>
</dbReference>
<dbReference type="EMBL" id="AC108478">
    <property type="status" value="NOT_ANNOTATED_CDS"/>
    <property type="molecule type" value="Genomic_DNA"/>
</dbReference>
<dbReference type="EMBL" id="BC103995">
    <property type="protein sequence ID" value="AAI03996.1"/>
    <property type="status" value="ALT_INIT"/>
    <property type="molecule type" value="mRNA"/>
</dbReference>
<dbReference type="EMBL" id="BC103996">
    <property type="protein sequence ID" value="AAI03997.1"/>
    <property type="status" value="ALT_INIT"/>
    <property type="molecule type" value="mRNA"/>
</dbReference>
<dbReference type="CCDS" id="CCDS54766.2">
    <molecule id="Q8N8F6-1"/>
</dbReference>
<dbReference type="RefSeq" id="NP_872398.3">
    <molecule id="Q8N8F6-1"/>
    <property type="nucleotide sequence ID" value="NM_182592.3"/>
</dbReference>
<dbReference type="FunCoup" id="Q8N8F6">
    <property type="interactions" value="500"/>
</dbReference>
<dbReference type="STRING" id="9606.ENSP00000332772"/>
<dbReference type="PhosphoSitePlus" id="Q8N8F6"/>
<dbReference type="BioMuta" id="YIPF7"/>
<dbReference type="DMDM" id="189030344"/>
<dbReference type="MassIVE" id="Q8N8F6"/>
<dbReference type="PaxDb" id="9606-ENSP00000332772"/>
<dbReference type="PeptideAtlas" id="Q8N8F6"/>
<dbReference type="Antibodypedia" id="23722">
    <property type="antibodies" value="31 antibodies from 15 providers"/>
</dbReference>
<dbReference type="DNASU" id="285525"/>
<dbReference type="Ensembl" id="ENST00000332990.6">
    <molecule id="Q8N8F6-5"/>
    <property type="protein sequence ID" value="ENSP00000332772.6"/>
    <property type="gene ID" value="ENSG00000177752.15"/>
</dbReference>
<dbReference type="Ensembl" id="ENST00000415895.9">
    <molecule id="Q8N8F6-1"/>
    <property type="protein sequence ID" value="ENSP00000412696.4"/>
    <property type="gene ID" value="ENSG00000177752.15"/>
</dbReference>
<dbReference type="GeneID" id="285525"/>
<dbReference type="KEGG" id="hsa:285525"/>
<dbReference type="MANE-Select" id="ENST00000415895.9">
    <property type="protein sequence ID" value="ENSP00000412696.4"/>
    <property type="RefSeq nucleotide sequence ID" value="NM_182592.3"/>
    <property type="RefSeq protein sequence ID" value="NP_872398.3"/>
</dbReference>
<dbReference type="UCSC" id="uc062wht.1">
    <molecule id="Q8N8F6-1"/>
    <property type="organism name" value="human"/>
</dbReference>
<dbReference type="AGR" id="HGNC:26825"/>
<dbReference type="CTD" id="285525"/>
<dbReference type="GeneCards" id="YIPF7"/>
<dbReference type="HGNC" id="HGNC:26825">
    <property type="gene designation" value="YIPF7"/>
</dbReference>
<dbReference type="HPA" id="ENSG00000177752">
    <property type="expression patterns" value="Group enriched (skeletal muscle, tongue)"/>
</dbReference>
<dbReference type="MIM" id="619754">
    <property type="type" value="gene"/>
</dbReference>
<dbReference type="neXtProt" id="NX_Q8N8F6"/>
<dbReference type="PharmGKB" id="PA142670550"/>
<dbReference type="VEuPathDB" id="HostDB:ENSG00000177752"/>
<dbReference type="eggNOG" id="KOG3103">
    <property type="taxonomic scope" value="Eukaryota"/>
</dbReference>
<dbReference type="GeneTree" id="ENSGT00940000153168"/>
<dbReference type="HOGENOM" id="CLU_074741_2_0_1"/>
<dbReference type="InParanoid" id="Q8N8F6"/>
<dbReference type="OMA" id="GYTGQFF"/>
<dbReference type="OrthoDB" id="440385at2759"/>
<dbReference type="PAN-GO" id="Q8N8F6">
    <property type="GO annotations" value="3 GO annotations based on evolutionary models"/>
</dbReference>
<dbReference type="PhylomeDB" id="Q8N8F6"/>
<dbReference type="TreeFam" id="TF313100"/>
<dbReference type="PathwayCommons" id="Q8N8F6"/>
<dbReference type="BioGRID-ORCS" id="285525">
    <property type="hits" value="15 hits in 1141 CRISPR screens"/>
</dbReference>
<dbReference type="GenomeRNAi" id="285525"/>
<dbReference type="Pharos" id="Q8N8F6">
    <property type="development level" value="Tdark"/>
</dbReference>
<dbReference type="PRO" id="PR:Q8N8F6"/>
<dbReference type="Proteomes" id="UP000005640">
    <property type="component" value="Chromosome 4"/>
</dbReference>
<dbReference type="RNAct" id="Q8N8F6">
    <property type="molecule type" value="protein"/>
</dbReference>
<dbReference type="Bgee" id="ENSG00000177752">
    <property type="expression patterns" value="Expressed in quadriceps femoris and 93 other cell types or tissues"/>
</dbReference>
<dbReference type="ExpressionAtlas" id="Q8N8F6">
    <property type="expression patterns" value="baseline and differential"/>
</dbReference>
<dbReference type="GO" id="GO:0005801">
    <property type="term" value="C:cis-Golgi network"/>
    <property type="evidence" value="ECO:0007669"/>
    <property type="project" value="Ensembl"/>
</dbReference>
<dbReference type="GO" id="GO:0005789">
    <property type="term" value="C:endoplasmic reticulum membrane"/>
    <property type="evidence" value="ECO:0007669"/>
    <property type="project" value="UniProtKB-SubCell"/>
</dbReference>
<dbReference type="GO" id="GO:0005793">
    <property type="term" value="C:endoplasmic reticulum-Golgi intermediate compartment"/>
    <property type="evidence" value="ECO:0007669"/>
    <property type="project" value="Ensembl"/>
</dbReference>
<dbReference type="GO" id="GO:0005802">
    <property type="term" value="C:trans-Golgi network"/>
    <property type="evidence" value="ECO:0000318"/>
    <property type="project" value="GO_Central"/>
</dbReference>
<dbReference type="GO" id="GO:0006888">
    <property type="term" value="P:endoplasmic reticulum to Golgi vesicle-mediated transport"/>
    <property type="evidence" value="ECO:0000318"/>
    <property type="project" value="GO_Central"/>
</dbReference>
<dbReference type="GO" id="GO:0048280">
    <property type="term" value="P:vesicle fusion with Golgi apparatus"/>
    <property type="evidence" value="ECO:0000318"/>
    <property type="project" value="GO_Central"/>
</dbReference>
<dbReference type="InterPro" id="IPR045231">
    <property type="entry name" value="Yip1/4-like"/>
</dbReference>
<dbReference type="InterPro" id="IPR006977">
    <property type="entry name" value="Yip1_dom"/>
</dbReference>
<dbReference type="PANTHER" id="PTHR21236">
    <property type="entry name" value="GOLGI MEMBRANE PROTEIN YIP1"/>
    <property type="match status" value="1"/>
</dbReference>
<dbReference type="PANTHER" id="PTHR21236:SF5">
    <property type="entry name" value="PROTEIN YIPF7"/>
    <property type="match status" value="1"/>
</dbReference>
<dbReference type="Pfam" id="PF04893">
    <property type="entry name" value="Yip1"/>
    <property type="match status" value="1"/>
</dbReference>
<sequence>MSNLAQFDSDFYQSNFTIDNQEQSGNDSNAYGNLYGSRKQQAGEQPQPASFVPSEMLMSSGYAGQFFQPASNSDYYSQSPYIDSFDEEPPLLEELGIHFDHIWQKTLTVLNPMKPVDGSIMNETDLTGPILFCVALGATLLLAGKVQFGYVYGMSAIGCLVIHALLNLMSSSGVSYGCVASVLGYCLLPMVILSGCAMFFSLQGIFGIMSSLVIIGWCSLSASKIFIAALHMEGQQLLVAYPCAILYGLFALLTIF</sequence>
<evidence type="ECO:0000250" key="1">
    <source>
        <dbReference type="UniProtKB" id="Q9JIM5"/>
    </source>
</evidence>
<evidence type="ECO:0000255" key="2"/>
<evidence type="ECO:0000256" key="3">
    <source>
        <dbReference type="SAM" id="MobiDB-lite"/>
    </source>
</evidence>
<evidence type="ECO:0000269" key="4">
    <source>
    </source>
</evidence>
<evidence type="ECO:0000269" key="5">
    <source>
    </source>
</evidence>
<evidence type="ECO:0000303" key="6">
    <source>
    </source>
</evidence>
<evidence type="ECO:0000303" key="7">
    <source>
    </source>
</evidence>
<evidence type="ECO:0000305" key="8"/>
<evidence type="ECO:0000305" key="9">
    <source>
    </source>
</evidence>